<keyword id="KW-0418">Kinase</keyword>
<keyword id="KW-0547">Nucleotide-binding</keyword>
<keyword id="KW-1185">Reference proteome</keyword>
<keyword id="KW-0723">Serine/threonine-protein kinase</keyword>
<keyword id="KW-0808">Transferase</keyword>
<comment type="function">
    <text evidence="1">Bifunctional serine/threonine kinase and phosphorylase involved in the regulation of the phosphoenolpyruvate synthase (PEPS) by catalyzing its phosphorylation/dephosphorylation.</text>
</comment>
<comment type="catalytic activity">
    <reaction evidence="1">
        <text>[pyruvate, water dikinase] + ADP = [pyruvate, water dikinase]-phosphate + AMP + H(+)</text>
        <dbReference type="Rhea" id="RHEA:46020"/>
        <dbReference type="Rhea" id="RHEA-COMP:11425"/>
        <dbReference type="Rhea" id="RHEA-COMP:11426"/>
        <dbReference type="ChEBI" id="CHEBI:15378"/>
        <dbReference type="ChEBI" id="CHEBI:43176"/>
        <dbReference type="ChEBI" id="CHEBI:68546"/>
        <dbReference type="ChEBI" id="CHEBI:456215"/>
        <dbReference type="ChEBI" id="CHEBI:456216"/>
        <dbReference type="EC" id="2.7.11.33"/>
    </reaction>
</comment>
<comment type="catalytic activity">
    <reaction evidence="1">
        <text>[pyruvate, water dikinase]-phosphate + phosphate + H(+) = [pyruvate, water dikinase] + diphosphate</text>
        <dbReference type="Rhea" id="RHEA:48580"/>
        <dbReference type="Rhea" id="RHEA-COMP:11425"/>
        <dbReference type="Rhea" id="RHEA-COMP:11426"/>
        <dbReference type="ChEBI" id="CHEBI:15378"/>
        <dbReference type="ChEBI" id="CHEBI:33019"/>
        <dbReference type="ChEBI" id="CHEBI:43176"/>
        <dbReference type="ChEBI" id="CHEBI:43474"/>
        <dbReference type="ChEBI" id="CHEBI:68546"/>
        <dbReference type="EC" id="2.7.4.28"/>
    </reaction>
</comment>
<comment type="similarity">
    <text evidence="1">Belongs to the pyruvate, phosphate/water dikinase regulatory protein family. PSRP subfamily.</text>
</comment>
<dbReference type="EC" id="2.7.11.33" evidence="1"/>
<dbReference type="EC" id="2.7.4.28" evidence="1"/>
<dbReference type="EMBL" id="AM743169">
    <property type="protein sequence ID" value="CAQ46426.1"/>
    <property type="molecule type" value="Genomic_DNA"/>
</dbReference>
<dbReference type="RefSeq" id="WP_005410097.1">
    <property type="nucleotide sequence ID" value="NC_010943.1"/>
</dbReference>
<dbReference type="SMR" id="B2FJE7"/>
<dbReference type="EnsemblBacteria" id="CAQ46426">
    <property type="protein sequence ID" value="CAQ46426"/>
    <property type="gene ID" value="Smlt2974"/>
</dbReference>
<dbReference type="KEGG" id="sml:Smlt2974"/>
<dbReference type="eggNOG" id="COG1806">
    <property type="taxonomic scope" value="Bacteria"/>
</dbReference>
<dbReference type="HOGENOM" id="CLU_046206_1_0_6"/>
<dbReference type="Proteomes" id="UP000008840">
    <property type="component" value="Chromosome"/>
</dbReference>
<dbReference type="GO" id="GO:0043531">
    <property type="term" value="F:ADP binding"/>
    <property type="evidence" value="ECO:0007669"/>
    <property type="project" value="UniProtKB-UniRule"/>
</dbReference>
<dbReference type="GO" id="GO:0005524">
    <property type="term" value="F:ATP binding"/>
    <property type="evidence" value="ECO:0007669"/>
    <property type="project" value="InterPro"/>
</dbReference>
<dbReference type="GO" id="GO:0016776">
    <property type="term" value="F:phosphotransferase activity, phosphate group as acceptor"/>
    <property type="evidence" value="ECO:0007669"/>
    <property type="project" value="UniProtKB-UniRule"/>
</dbReference>
<dbReference type="GO" id="GO:0004674">
    <property type="term" value="F:protein serine/threonine kinase activity"/>
    <property type="evidence" value="ECO:0007669"/>
    <property type="project" value="UniProtKB-UniRule"/>
</dbReference>
<dbReference type="HAMAP" id="MF_01062">
    <property type="entry name" value="PSRP"/>
    <property type="match status" value="1"/>
</dbReference>
<dbReference type="InterPro" id="IPR005177">
    <property type="entry name" value="Kinase-pyrophosphorylase"/>
</dbReference>
<dbReference type="InterPro" id="IPR026530">
    <property type="entry name" value="PSRP"/>
</dbReference>
<dbReference type="NCBIfam" id="NF003742">
    <property type="entry name" value="PRK05339.1"/>
    <property type="match status" value="1"/>
</dbReference>
<dbReference type="PANTHER" id="PTHR31756">
    <property type="entry name" value="PYRUVATE, PHOSPHATE DIKINASE REGULATORY PROTEIN 1, CHLOROPLASTIC"/>
    <property type="match status" value="1"/>
</dbReference>
<dbReference type="PANTHER" id="PTHR31756:SF3">
    <property type="entry name" value="PYRUVATE, PHOSPHATE DIKINASE REGULATORY PROTEIN 1, CHLOROPLASTIC"/>
    <property type="match status" value="1"/>
</dbReference>
<dbReference type="Pfam" id="PF03618">
    <property type="entry name" value="Kinase-PPPase"/>
    <property type="match status" value="1"/>
</dbReference>
<accession>B2FJE7</accession>
<sequence length="273" mass="30703">MSTIRPVFYVSDGTGITAETIGHSLLTQFSGFSFITDRMSFVDDPEKAREACARIQAAGERYQVRPIVVNSCVDQSLSLILADSGALMLDVFAPFIEPLERELASPRLARVGQAHGMVDFDTYHRRINAMNFALTHDDGIAVNYDDADVILVAVSRAGKTPTCIYLALHYGVRAANYPLTDEDLESDRLPPRLRNYRRKLFGLTIDPDRLQQIRQERRPNSRYANLETCKREVAAAEVMFQMERIPTLSTTHTSIEEISSKVLATLGLQRELY</sequence>
<evidence type="ECO:0000255" key="1">
    <source>
        <dbReference type="HAMAP-Rule" id="MF_01062"/>
    </source>
</evidence>
<name>PSRP_STRMK</name>
<reference key="1">
    <citation type="journal article" date="2008" name="Genome Biol.">
        <title>The complete genome, comparative and functional analysis of Stenotrophomonas maltophilia reveals an organism heavily shielded by drug resistance determinants.</title>
        <authorList>
            <person name="Crossman L.C."/>
            <person name="Gould V.C."/>
            <person name="Dow J.M."/>
            <person name="Vernikos G.S."/>
            <person name="Okazaki A."/>
            <person name="Sebaihia M."/>
            <person name="Saunders D."/>
            <person name="Arrowsmith C."/>
            <person name="Carver T."/>
            <person name="Peters N."/>
            <person name="Adlem E."/>
            <person name="Kerhornou A."/>
            <person name="Lord A."/>
            <person name="Murphy L."/>
            <person name="Seeger K."/>
            <person name="Squares R."/>
            <person name="Rutter S."/>
            <person name="Quail M.A."/>
            <person name="Rajandream M.A."/>
            <person name="Harris D."/>
            <person name="Churcher C."/>
            <person name="Bentley S.D."/>
            <person name="Parkhill J."/>
            <person name="Thomson N.R."/>
            <person name="Avison M.B."/>
        </authorList>
    </citation>
    <scope>NUCLEOTIDE SEQUENCE [LARGE SCALE GENOMIC DNA]</scope>
    <source>
        <strain>K279a</strain>
    </source>
</reference>
<gene>
    <name type="ordered locus">Smlt2974</name>
</gene>
<proteinExistence type="inferred from homology"/>
<organism>
    <name type="scientific">Stenotrophomonas maltophilia (strain K279a)</name>
    <dbReference type="NCBI Taxonomy" id="522373"/>
    <lineage>
        <taxon>Bacteria</taxon>
        <taxon>Pseudomonadati</taxon>
        <taxon>Pseudomonadota</taxon>
        <taxon>Gammaproteobacteria</taxon>
        <taxon>Lysobacterales</taxon>
        <taxon>Lysobacteraceae</taxon>
        <taxon>Stenotrophomonas</taxon>
        <taxon>Stenotrophomonas maltophilia group</taxon>
    </lineage>
</organism>
<feature type="chain" id="PRO_1000136500" description="Putative phosphoenolpyruvate synthase regulatory protein">
    <location>
        <begin position="1"/>
        <end position="273"/>
    </location>
</feature>
<feature type="binding site" evidence="1">
    <location>
        <begin position="153"/>
        <end position="160"/>
    </location>
    <ligand>
        <name>ADP</name>
        <dbReference type="ChEBI" id="CHEBI:456216"/>
    </ligand>
</feature>
<protein>
    <recommendedName>
        <fullName evidence="1">Putative phosphoenolpyruvate synthase regulatory protein</fullName>
        <shortName evidence="1">PEP synthase regulatory protein</shortName>
        <shortName evidence="1">PSRP</shortName>
        <ecNumber evidence="1">2.7.11.33</ecNumber>
        <ecNumber evidence="1">2.7.4.28</ecNumber>
    </recommendedName>
    <alternativeName>
        <fullName evidence="1">Pyruvate, water dikinase regulatory protein</fullName>
    </alternativeName>
</protein>